<sequence>MGRAREMGWMAAGLMIGAGACYCMYKLTMGRSEGNELEDEEEDEWEDGQDLDEEEADNWFDFTAMARPWSEDGDWDEPGAPGGTEDRRSGGGKANRAHPIKQRPFPYEHKNIWGEQSFKSFTCILDLNKCVSTQRKKRFTKNINAGFSLSPNISKHLASLSVVGNRSPTPHPTVREKALFVPENPNSSLENQGQIKMSIDEVCRETLLCCCKSFLQQAGLSLLISMTVINNMLAKSVSDLKFPLLSKGSGCAEVRGLEELMSLSEKPVLVGEALAAQMLSSFMCLFTRSGSREMLVEAISP</sequence>
<comment type="function">
    <text evidence="4">May regulate the dynamics and distribution of mitochondria in neural cells.</text>
</comment>
<comment type="subcellular location">
    <subcellularLocation>
        <location evidence="4">Mitochondrion</location>
    </subcellularLocation>
    <subcellularLocation>
        <location evidence="1">Mitochondrion outer membrane</location>
        <topology evidence="2">Single-pass membrane protein</topology>
    </subcellularLocation>
</comment>
<comment type="tissue specificity">
    <text evidence="4">Highly expressed in the developing neural tissues, neural crest derivatives and hind limbs. Also widely expressed in the adult nervous tissue, especially in the forebrain, including the cerebral cortex, hippocampus and thalamus.</text>
</comment>
<comment type="similarity">
    <text evidence="5">Belongs to the eutherian X-chromosome-specific Armcx family.</text>
</comment>
<protein>
    <recommendedName>
        <fullName>Protein ARMCX6</fullName>
    </recommendedName>
</protein>
<name>ARMX6_MOUSE</name>
<proteinExistence type="evidence at transcript level"/>
<organism>
    <name type="scientific">Mus musculus</name>
    <name type="common">Mouse</name>
    <dbReference type="NCBI Taxonomy" id="10090"/>
    <lineage>
        <taxon>Eukaryota</taxon>
        <taxon>Metazoa</taxon>
        <taxon>Chordata</taxon>
        <taxon>Craniata</taxon>
        <taxon>Vertebrata</taxon>
        <taxon>Euteleostomi</taxon>
        <taxon>Mammalia</taxon>
        <taxon>Eutheria</taxon>
        <taxon>Euarchontoglires</taxon>
        <taxon>Glires</taxon>
        <taxon>Rodentia</taxon>
        <taxon>Myomorpha</taxon>
        <taxon>Muroidea</taxon>
        <taxon>Muridae</taxon>
        <taxon>Murinae</taxon>
        <taxon>Mus</taxon>
        <taxon>Mus</taxon>
    </lineage>
</organism>
<feature type="chain" id="PRO_0000191375" description="Protein ARMCX6">
    <location>
        <begin position="1"/>
        <end position="301"/>
    </location>
</feature>
<feature type="topological domain" description="Mitochondrial intermembrane" evidence="1">
    <location>
        <begin position="1"/>
        <end position="7"/>
    </location>
</feature>
<feature type="transmembrane region" description="Helical; Signal-anchor" evidence="2">
    <location>
        <begin position="8"/>
        <end position="25"/>
    </location>
</feature>
<feature type="topological domain" description="Cytoplasmic" evidence="1">
    <location>
        <begin position="26"/>
        <end position="301"/>
    </location>
</feature>
<feature type="region of interest" description="Mitochondrion outer membrane (MOM)-targeting sequence" evidence="6">
    <location>
        <begin position="1"/>
        <end position="6"/>
    </location>
</feature>
<feature type="region of interest" description="Mitochondrion outer membrane (MOM)-targeting sequence" evidence="6">
    <location>
        <begin position="26"/>
        <end position="36"/>
    </location>
</feature>
<feature type="region of interest" description="Disordered" evidence="3">
    <location>
        <begin position="69"/>
        <end position="101"/>
    </location>
</feature>
<reference key="1">
    <citation type="journal article" date="2009" name="PLoS Biol.">
        <title>Lineage-specific biology revealed by a finished genome assembly of the mouse.</title>
        <authorList>
            <person name="Church D.M."/>
            <person name="Goodstadt L."/>
            <person name="Hillier L.W."/>
            <person name="Zody M.C."/>
            <person name="Goldstein S."/>
            <person name="She X."/>
            <person name="Bult C.J."/>
            <person name="Agarwala R."/>
            <person name="Cherry J.L."/>
            <person name="DiCuccio M."/>
            <person name="Hlavina W."/>
            <person name="Kapustin Y."/>
            <person name="Meric P."/>
            <person name="Maglott D."/>
            <person name="Birtle Z."/>
            <person name="Marques A.C."/>
            <person name="Graves T."/>
            <person name="Zhou S."/>
            <person name="Teague B."/>
            <person name="Potamousis K."/>
            <person name="Churas C."/>
            <person name="Place M."/>
            <person name="Herschleb J."/>
            <person name="Runnheim R."/>
            <person name="Forrest D."/>
            <person name="Amos-Landgraf J."/>
            <person name="Schwartz D.C."/>
            <person name="Cheng Z."/>
            <person name="Lindblad-Toh K."/>
            <person name="Eichler E.E."/>
            <person name="Ponting C.P."/>
        </authorList>
    </citation>
    <scope>NUCLEOTIDE SEQUENCE [LARGE SCALE GENOMIC DNA]</scope>
    <source>
        <strain>C57BL/6J</strain>
    </source>
</reference>
<reference key="2">
    <citation type="journal article" date="2004" name="Genome Res.">
        <title>The status, quality, and expansion of the NIH full-length cDNA project: the Mammalian Gene Collection (MGC).</title>
        <authorList>
            <consortium name="The MGC Project Team"/>
        </authorList>
    </citation>
    <scope>NUCLEOTIDE SEQUENCE [LARGE SCALE MRNA]</scope>
    <source>
        <strain>Czech II</strain>
        <tissue>Mammary tumor</tissue>
    </source>
</reference>
<reference key="3">
    <citation type="journal article" date="2005" name="Science">
        <title>The transcriptional landscape of the mammalian genome.</title>
        <authorList>
            <person name="Carninci P."/>
            <person name="Kasukawa T."/>
            <person name="Katayama S."/>
            <person name="Gough J."/>
            <person name="Frith M.C."/>
            <person name="Maeda N."/>
            <person name="Oyama R."/>
            <person name="Ravasi T."/>
            <person name="Lenhard B."/>
            <person name="Wells C."/>
            <person name="Kodzius R."/>
            <person name="Shimokawa K."/>
            <person name="Bajic V.B."/>
            <person name="Brenner S.E."/>
            <person name="Batalov S."/>
            <person name="Forrest A.R."/>
            <person name="Zavolan M."/>
            <person name="Davis M.J."/>
            <person name="Wilming L.G."/>
            <person name="Aidinis V."/>
            <person name="Allen J.E."/>
            <person name="Ambesi-Impiombato A."/>
            <person name="Apweiler R."/>
            <person name="Aturaliya R.N."/>
            <person name="Bailey T.L."/>
            <person name="Bansal M."/>
            <person name="Baxter L."/>
            <person name="Beisel K.W."/>
            <person name="Bersano T."/>
            <person name="Bono H."/>
            <person name="Chalk A.M."/>
            <person name="Chiu K.P."/>
            <person name="Choudhary V."/>
            <person name="Christoffels A."/>
            <person name="Clutterbuck D.R."/>
            <person name="Crowe M.L."/>
            <person name="Dalla E."/>
            <person name="Dalrymple B.P."/>
            <person name="de Bono B."/>
            <person name="Della Gatta G."/>
            <person name="di Bernardo D."/>
            <person name="Down T."/>
            <person name="Engstrom P."/>
            <person name="Fagiolini M."/>
            <person name="Faulkner G."/>
            <person name="Fletcher C.F."/>
            <person name="Fukushima T."/>
            <person name="Furuno M."/>
            <person name="Futaki S."/>
            <person name="Gariboldi M."/>
            <person name="Georgii-Hemming P."/>
            <person name="Gingeras T.R."/>
            <person name="Gojobori T."/>
            <person name="Green R.E."/>
            <person name="Gustincich S."/>
            <person name="Harbers M."/>
            <person name="Hayashi Y."/>
            <person name="Hensch T.K."/>
            <person name="Hirokawa N."/>
            <person name="Hill D."/>
            <person name="Huminiecki L."/>
            <person name="Iacono M."/>
            <person name="Ikeo K."/>
            <person name="Iwama A."/>
            <person name="Ishikawa T."/>
            <person name="Jakt M."/>
            <person name="Kanapin A."/>
            <person name="Katoh M."/>
            <person name="Kawasawa Y."/>
            <person name="Kelso J."/>
            <person name="Kitamura H."/>
            <person name="Kitano H."/>
            <person name="Kollias G."/>
            <person name="Krishnan S.P."/>
            <person name="Kruger A."/>
            <person name="Kummerfeld S.K."/>
            <person name="Kurochkin I.V."/>
            <person name="Lareau L.F."/>
            <person name="Lazarevic D."/>
            <person name="Lipovich L."/>
            <person name="Liu J."/>
            <person name="Liuni S."/>
            <person name="McWilliam S."/>
            <person name="Madan Babu M."/>
            <person name="Madera M."/>
            <person name="Marchionni L."/>
            <person name="Matsuda H."/>
            <person name="Matsuzawa S."/>
            <person name="Miki H."/>
            <person name="Mignone F."/>
            <person name="Miyake S."/>
            <person name="Morris K."/>
            <person name="Mottagui-Tabar S."/>
            <person name="Mulder N."/>
            <person name="Nakano N."/>
            <person name="Nakauchi H."/>
            <person name="Ng P."/>
            <person name="Nilsson R."/>
            <person name="Nishiguchi S."/>
            <person name="Nishikawa S."/>
            <person name="Nori F."/>
            <person name="Ohara O."/>
            <person name="Okazaki Y."/>
            <person name="Orlando V."/>
            <person name="Pang K.C."/>
            <person name="Pavan W.J."/>
            <person name="Pavesi G."/>
            <person name="Pesole G."/>
            <person name="Petrovsky N."/>
            <person name="Piazza S."/>
            <person name="Reed J."/>
            <person name="Reid J.F."/>
            <person name="Ring B.Z."/>
            <person name="Ringwald M."/>
            <person name="Rost B."/>
            <person name="Ruan Y."/>
            <person name="Salzberg S.L."/>
            <person name="Sandelin A."/>
            <person name="Schneider C."/>
            <person name="Schoenbach C."/>
            <person name="Sekiguchi K."/>
            <person name="Semple C.A."/>
            <person name="Seno S."/>
            <person name="Sessa L."/>
            <person name="Sheng Y."/>
            <person name="Shibata Y."/>
            <person name="Shimada H."/>
            <person name="Shimada K."/>
            <person name="Silva D."/>
            <person name="Sinclair B."/>
            <person name="Sperling S."/>
            <person name="Stupka E."/>
            <person name="Sugiura K."/>
            <person name="Sultana R."/>
            <person name="Takenaka Y."/>
            <person name="Taki K."/>
            <person name="Tammoja K."/>
            <person name="Tan S.L."/>
            <person name="Tang S."/>
            <person name="Taylor M.S."/>
            <person name="Tegner J."/>
            <person name="Teichmann S.A."/>
            <person name="Ueda H.R."/>
            <person name="van Nimwegen E."/>
            <person name="Verardo R."/>
            <person name="Wei C.L."/>
            <person name="Yagi K."/>
            <person name="Yamanishi H."/>
            <person name="Zabarovsky E."/>
            <person name="Zhu S."/>
            <person name="Zimmer A."/>
            <person name="Hide W."/>
            <person name="Bult C."/>
            <person name="Grimmond S.M."/>
            <person name="Teasdale R.D."/>
            <person name="Liu E.T."/>
            <person name="Brusic V."/>
            <person name="Quackenbush J."/>
            <person name="Wahlestedt C."/>
            <person name="Mattick J.S."/>
            <person name="Hume D.A."/>
            <person name="Kai C."/>
            <person name="Sasaki D."/>
            <person name="Tomaru Y."/>
            <person name="Fukuda S."/>
            <person name="Kanamori-Katayama M."/>
            <person name="Suzuki M."/>
            <person name="Aoki J."/>
            <person name="Arakawa T."/>
            <person name="Iida J."/>
            <person name="Imamura K."/>
            <person name="Itoh M."/>
            <person name="Kato T."/>
            <person name="Kawaji H."/>
            <person name="Kawagashira N."/>
            <person name="Kawashima T."/>
            <person name="Kojima M."/>
            <person name="Kondo S."/>
            <person name="Konno H."/>
            <person name="Nakano K."/>
            <person name="Ninomiya N."/>
            <person name="Nishio T."/>
            <person name="Okada M."/>
            <person name="Plessy C."/>
            <person name="Shibata K."/>
            <person name="Shiraki T."/>
            <person name="Suzuki S."/>
            <person name="Tagami M."/>
            <person name="Waki K."/>
            <person name="Watahiki A."/>
            <person name="Okamura-Oho Y."/>
            <person name="Suzuki H."/>
            <person name="Kawai J."/>
            <person name="Hayashizaki Y."/>
        </authorList>
    </citation>
    <scope>NUCLEOTIDE SEQUENCE [LARGE SCALE MRNA] OF 1-133</scope>
    <source>
        <strain>C57BL/6J</strain>
        <tissue>Head</tissue>
    </source>
</reference>
<reference key="4">
    <citation type="journal article" date="2012" name="Nat. Commun.">
        <title>The eutherian Armcx genes regulate mitochondrial trafficking in neurons and interact with Miro and Trak2.</title>
        <authorList>
            <person name="Lopez-Domenech G."/>
            <person name="Serrat R."/>
            <person name="Mirra S."/>
            <person name="D'Aniello S."/>
            <person name="Somorjai I."/>
            <person name="Abad A."/>
            <person name="Vitureira N."/>
            <person name="Garcia-Arumi E."/>
            <person name="Alonso M.T."/>
            <person name="Rodriguez-Prados M."/>
            <person name="Burgaya F."/>
            <person name="Andreu A.L."/>
            <person name="Garcia-Sancho J."/>
            <person name="Trullas R."/>
            <person name="Garcia-Fernandez J."/>
            <person name="Soriano E."/>
        </authorList>
    </citation>
    <scope>FUNCTION</scope>
    <scope>SUBCELLULAR LOCATION</scope>
    <scope>TISSUE SPECIFICITY</scope>
</reference>
<evidence type="ECO:0000250" key="1">
    <source>
        <dbReference type="UniProtKB" id="Q8BHS6"/>
    </source>
</evidence>
<evidence type="ECO:0000255" key="2"/>
<evidence type="ECO:0000256" key="3">
    <source>
        <dbReference type="SAM" id="MobiDB-lite"/>
    </source>
</evidence>
<evidence type="ECO:0000269" key="4">
    <source>
    </source>
</evidence>
<evidence type="ECO:0000305" key="5"/>
<evidence type="ECO:0000305" key="6">
    <source>
    </source>
</evidence>
<keyword id="KW-0472">Membrane</keyword>
<keyword id="KW-0496">Mitochondrion</keyword>
<keyword id="KW-1000">Mitochondrion outer membrane</keyword>
<keyword id="KW-1185">Reference proteome</keyword>
<keyword id="KW-0735">Signal-anchor</keyword>
<keyword id="KW-0812">Transmembrane</keyword>
<keyword id="KW-1133">Transmembrane helix</keyword>
<dbReference type="EMBL" id="AL772348">
    <property type="status" value="NOT_ANNOTATED_CDS"/>
    <property type="molecule type" value="Genomic_DNA"/>
</dbReference>
<dbReference type="EMBL" id="BC027264">
    <property type="protein sequence ID" value="AAH27264.1"/>
    <property type="molecule type" value="mRNA"/>
</dbReference>
<dbReference type="EMBL" id="AK160766">
    <property type="protein sequence ID" value="BAE35997.1"/>
    <property type="molecule type" value="mRNA"/>
</dbReference>
<dbReference type="CCDS" id="CCDS30399.1"/>
<dbReference type="RefSeq" id="NP_001007579.1">
    <property type="nucleotide sequence ID" value="NM_001007578.2"/>
</dbReference>
<dbReference type="RefSeq" id="XP_011246047.1">
    <property type="nucleotide sequence ID" value="XM_011247745.3"/>
</dbReference>
<dbReference type="RefSeq" id="XP_011246048.1">
    <property type="nucleotide sequence ID" value="XM_011247746.3"/>
</dbReference>
<dbReference type="RefSeq" id="XP_036017867.1">
    <property type="nucleotide sequence ID" value="XM_036161974.1"/>
</dbReference>
<dbReference type="RefSeq" id="XP_036017868.1">
    <property type="nucleotide sequence ID" value="XM_036161975.1"/>
</dbReference>
<dbReference type="SMR" id="Q8K3A6"/>
<dbReference type="BioGRID" id="234973">
    <property type="interactions" value="1"/>
</dbReference>
<dbReference type="FunCoup" id="Q8K3A6">
    <property type="interactions" value="164"/>
</dbReference>
<dbReference type="STRING" id="10090.ENSMUSP00000108819"/>
<dbReference type="PhosphoSitePlus" id="Q8K3A6"/>
<dbReference type="PaxDb" id="10090-ENSMUSP00000057277"/>
<dbReference type="ProteomicsDB" id="277307"/>
<dbReference type="Antibodypedia" id="14751">
    <property type="antibodies" value="113 antibodies from 21 providers"/>
</dbReference>
<dbReference type="DNASU" id="278097"/>
<dbReference type="Ensembl" id="ENSMUST00000052431.12">
    <property type="protein sequence ID" value="ENSMUSP00000057277.6"/>
    <property type="gene ID" value="ENSMUSG00000050394.15"/>
</dbReference>
<dbReference type="Ensembl" id="ENSMUST00000113194.8">
    <property type="protein sequence ID" value="ENSMUSP00000108819.2"/>
    <property type="gene ID" value="ENSMUSG00000050394.15"/>
</dbReference>
<dbReference type="GeneID" id="278097"/>
<dbReference type="KEGG" id="mmu:278097"/>
<dbReference type="UCSC" id="uc012hom.1">
    <property type="organism name" value="mouse"/>
</dbReference>
<dbReference type="AGR" id="MGI:2147993"/>
<dbReference type="CTD" id="54470"/>
<dbReference type="MGI" id="MGI:2147993">
    <property type="gene designation" value="Armcx6"/>
</dbReference>
<dbReference type="VEuPathDB" id="HostDB:ENSMUSG00000050394"/>
<dbReference type="eggNOG" id="ENOG502RP3G">
    <property type="taxonomic scope" value="Eukaryota"/>
</dbReference>
<dbReference type="GeneTree" id="ENSGT00940000163042"/>
<dbReference type="HOGENOM" id="CLU_037187_0_1_1"/>
<dbReference type="InParanoid" id="Q8K3A6"/>
<dbReference type="OMA" id="FIQGKMW"/>
<dbReference type="OrthoDB" id="10017790at2759"/>
<dbReference type="PhylomeDB" id="Q8K3A6"/>
<dbReference type="TreeFam" id="TF335652"/>
<dbReference type="BioGRID-ORCS" id="278097">
    <property type="hits" value="5 hits in 77 CRISPR screens"/>
</dbReference>
<dbReference type="ChiTaRS" id="Armcx6">
    <property type="organism name" value="mouse"/>
</dbReference>
<dbReference type="PRO" id="PR:Q8K3A6"/>
<dbReference type="Proteomes" id="UP000000589">
    <property type="component" value="Chromosome X"/>
</dbReference>
<dbReference type="RNAct" id="Q8K3A6">
    <property type="molecule type" value="protein"/>
</dbReference>
<dbReference type="Bgee" id="ENSMUSG00000050394">
    <property type="expression patterns" value="Expressed in ovary and 59 other cell types or tissues"/>
</dbReference>
<dbReference type="GO" id="GO:0005741">
    <property type="term" value="C:mitochondrial outer membrane"/>
    <property type="evidence" value="ECO:0007669"/>
    <property type="project" value="UniProtKB-SubCell"/>
</dbReference>
<dbReference type="InterPro" id="IPR006911">
    <property type="entry name" value="ARM-rpt_dom"/>
</dbReference>
<dbReference type="InterPro" id="IPR051303">
    <property type="entry name" value="Armcx_regulator"/>
</dbReference>
<dbReference type="PANTHER" id="PTHR15712">
    <property type="entry name" value="ARMADILLO REPEAT CONTAINING PROTEIN"/>
    <property type="match status" value="1"/>
</dbReference>
<dbReference type="PANTHER" id="PTHR15712:SF6">
    <property type="entry name" value="PROTEIN ARMCX6"/>
    <property type="match status" value="1"/>
</dbReference>
<dbReference type="Pfam" id="PF04826">
    <property type="entry name" value="Arm_2"/>
    <property type="match status" value="1"/>
</dbReference>
<accession>Q8K3A6</accession>
<accession>A2AKS3</accession>
<accession>Q3TUH4</accession>
<gene>
    <name type="primary">Armcx6</name>
</gene>